<comment type="function">
    <text evidence="1">The RecF protein is involved in DNA metabolism; it is required for DNA replication and normal SOS inducibility. RecF binds preferentially to single-stranded, linear DNA. It also seems to bind ATP.</text>
</comment>
<comment type="subcellular location">
    <subcellularLocation>
        <location evidence="1">Cytoplasm</location>
    </subcellularLocation>
</comment>
<comment type="similarity">
    <text evidence="1">Belongs to the RecF family.</text>
</comment>
<dbReference type="EMBL" id="CP001191">
    <property type="protein sequence ID" value="ACI57354.1"/>
    <property type="molecule type" value="Genomic_DNA"/>
</dbReference>
<dbReference type="RefSeq" id="WP_012559502.1">
    <property type="nucleotide sequence ID" value="NC_011369.1"/>
</dbReference>
<dbReference type="SMR" id="B5ZWP8"/>
<dbReference type="STRING" id="395492.Rleg2_4092"/>
<dbReference type="KEGG" id="rlt:Rleg2_4092"/>
<dbReference type="eggNOG" id="COG1195">
    <property type="taxonomic scope" value="Bacteria"/>
</dbReference>
<dbReference type="HOGENOM" id="CLU_040267_2_0_5"/>
<dbReference type="Proteomes" id="UP000008330">
    <property type="component" value="Chromosome"/>
</dbReference>
<dbReference type="GO" id="GO:0005737">
    <property type="term" value="C:cytoplasm"/>
    <property type="evidence" value="ECO:0007669"/>
    <property type="project" value="UniProtKB-SubCell"/>
</dbReference>
<dbReference type="GO" id="GO:0005524">
    <property type="term" value="F:ATP binding"/>
    <property type="evidence" value="ECO:0007669"/>
    <property type="project" value="UniProtKB-UniRule"/>
</dbReference>
<dbReference type="GO" id="GO:0016887">
    <property type="term" value="F:ATP hydrolysis activity"/>
    <property type="evidence" value="ECO:0007669"/>
    <property type="project" value="InterPro"/>
</dbReference>
<dbReference type="GO" id="GO:0003697">
    <property type="term" value="F:single-stranded DNA binding"/>
    <property type="evidence" value="ECO:0007669"/>
    <property type="project" value="UniProtKB-UniRule"/>
</dbReference>
<dbReference type="GO" id="GO:0006260">
    <property type="term" value="P:DNA replication"/>
    <property type="evidence" value="ECO:0007669"/>
    <property type="project" value="UniProtKB-UniRule"/>
</dbReference>
<dbReference type="GO" id="GO:0000731">
    <property type="term" value="P:DNA synthesis involved in DNA repair"/>
    <property type="evidence" value="ECO:0007669"/>
    <property type="project" value="TreeGrafter"/>
</dbReference>
<dbReference type="GO" id="GO:0006302">
    <property type="term" value="P:double-strand break repair"/>
    <property type="evidence" value="ECO:0007669"/>
    <property type="project" value="TreeGrafter"/>
</dbReference>
<dbReference type="GO" id="GO:0009432">
    <property type="term" value="P:SOS response"/>
    <property type="evidence" value="ECO:0007669"/>
    <property type="project" value="UniProtKB-UniRule"/>
</dbReference>
<dbReference type="CDD" id="cd03242">
    <property type="entry name" value="ABC_RecF"/>
    <property type="match status" value="1"/>
</dbReference>
<dbReference type="Gene3D" id="3.40.50.300">
    <property type="entry name" value="P-loop containing nucleotide triphosphate hydrolases"/>
    <property type="match status" value="1"/>
</dbReference>
<dbReference type="Gene3D" id="1.20.1050.90">
    <property type="entry name" value="RecF/RecN/SMC, N-terminal domain"/>
    <property type="match status" value="1"/>
</dbReference>
<dbReference type="HAMAP" id="MF_00365">
    <property type="entry name" value="RecF"/>
    <property type="match status" value="1"/>
</dbReference>
<dbReference type="InterPro" id="IPR003593">
    <property type="entry name" value="AAA+_ATPase"/>
</dbReference>
<dbReference type="InterPro" id="IPR001238">
    <property type="entry name" value="DNA-binding_RecF"/>
</dbReference>
<dbReference type="InterPro" id="IPR018078">
    <property type="entry name" value="DNA-binding_RecF_CS"/>
</dbReference>
<dbReference type="InterPro" id="IPR027417">
    <property type="entry name" value="P-loop_NTPase"/>
</dbReference>
<dbReference type="InterPro" id="IPR003395">
    <property type="entry name" value="RecF/RecN/SMC_N"/>
</dbReference>
<dbReference type="InterPro" id="IPR042174">
    <property type="entry name" value="RecF_2"/>
</dbReference>
<dbReference type="NCBIfam" id="TIGR00611">
    <property type="entry name" value="recf"/>
    <property type="match status" value="1"/>
</dbReference>
<dbReference type="PANTHER" id="PTHR32182">
    <property type="entry name" value="DNA REPLICATION AND REPAIR PROTEIN RECF"/>
    <property type="match status" value="1"/>
</dbReference>
<dbReference type="PANTHER" id="PTHR32182:SF0">
    <property type="entry name" value="DNA REPLICATION AND REPAIR PROTEIN RECF"/>
    <property type="match status" value="1"/>
</dbReference>
<dbReference type="Pfam" id="PF02463">
    <property type="entry name" value="SMC_N"/>
    <property type="match status" value="1"/>
</dbReference>
<dbReference type="SMART" id="SM00382">
    <property type="entry name" value="AAA"/>
    <property type="match status" value="1"/>
</dbReference>
<dbReference type="SUPFAM" id="SSF52540">
    <property type="entry name" value="P-loop containing nucleoside triphosphate hydrolases"/>
    <property type="match status" value="1"/>
</dbReference>
<dbReference type="PROSITE" id="PS00617">
    <property type="entry name" value="RECF_1"/>
    <property type="match status" value="1"/>
</dbReference>
<dbReference type="PROSITE" id="PS00618">
    <property type="entry name" value="RECF_2"/>
    <property type="match status" value="1"/>
</dbReference>
<evidence type="ECO:0000255" key="1">
    <source>
        <dbReference type="HAMAP-Rule" id="MF_00365"/>
    </source>
</evidence>
<keyword id="KW-0067">ATP-binding</keyword>
<keyword id="KW-0963">Cytoplasm</keyword>
<keyword id="KW-0227">DNA damage</keyword>
<keyword id="KW-0234">DNA repair</keyword>
<keyword id="KW-0235">DNA replication</keyword>
<keyword id="KW-0238">DNA-binding</keyword>
<keyword id="KW-0547">Nucleotide-binding</keyword>
<keyword id="KW-1185">Reference proteome</keyword>
<keyword id="KW-0742">SOS response</keyword>
<organism>
    <name type="scientific">Rhizobium leguminosarum bv. trifolii (strain WSM2304)</name>
    <dbReference type="NCBI Taxonomy" id="395492"/>
    <lineage>
        <taxon>Bacteria</taxon>
        <taxon>Pseudomonadati</taxon>
        <taxon>Pseudomonadota</taxon>
        <taxon>Alphaproteobacteria</taxon>
        <taxon>Hyphomicrobiales</taxon>
        <taxon>Rhizobiaceae</taxon>
        <taxon>Rhizobium/Agrobacterium group</taxon>
        <taxon>Rhizobium</taxon>
    </lineage>
</organism>
<sequence length="374" mass="40590">MPHKVSLSRLKLTDFRNYAAAALDLDGRHAVLTGDNGAGKTNLMEAVSLLSPGRGLRRAAYGDITRVGAAGGFSIFAALDGMEGEVEIGTGIETGEETTARRLRINGTQAKTADELTDHLRLLWLTPAMDGLFTGASSDRRRFLDRLVLSLDPAHGRRASDFERAMRSRNKLLDEGRFDPSWLAGIEEQMASLGIAMALARQEMLGLLTRLIEETRETSPFPSASLQLSGFMDGQFTRPSVDLEDEYAAMLSESRYRDAGAGRTLDGPHRADLIVHHREKAMEAERCSTGEQKALLVGLVLAHARLVGNLTGHAPILLLDEIAAHLDEGRRAALFDLIDGLGGQAFMTGTDRAMFSALGDRAQVFTVADGKIFE</sequence>
<reference key="1">
    <citation type="journal article" date="2010" name="Stand. Genomic Sci.">
        <title>Complete genome sequence of Rhizobium leguminosarum bv trifolii strain WSM2304, an effective microsymbiont of the South American clover Trifolium polymorphum.</title>
        <authorList>
            <person name="Reeve W."/>
            <person name="O'Hara G."/>
            <person name="Chain P."/>
            <person name="Ardley J."/>
            <person name="Brau L."/>
            <person name="Nandesena K."/>
            <person name="Tiwari R."/>
            <person name="Malfatti S."/>
            <person name="Kiss H."/>
            <person name="Lapidus A."/>
            <person name="Copeland A."/>
            <person name="Nolan M."/>
            <person name="Land M."/>
            <person name="Ivanova N."/>
            <person name="Mavromatis K."/>
            <person name="Markowitz V."/>
            <person name="Kyrpides N."/>
            <person name="Melino V."/>
            <person name="Denton M."/>
            <person name="Yates R."/>
            <person name="Howieson J."/>
        </authorList>
    </citation>
    <scope>NUCLEOTIDE SEQUENCE [LARGE SCALE GENOMIC DNA]</scope>
    <source>
        <strain>WSM2304</strain>
    </source>
</reference>
<name>RECF_RHILW</name>
<accession>B5ZWP8</accession>
<feature type="chain" id="PRO_1000121143" description="DNA replication and repair protein RecF">
    <location>
        <begin position="1"/>
        <end position="374"/>
    </location>
</feature>
<feature type="binding site" evidence="1">
    <location>
        <begin position="34"/>
        <end position="41"/>
    </location>
    <ligand>
        <name>ATP</name>
        <dbReference type="ChEBI" id="CHEBI:30616"/>
    </ligand>
</feature>
<proteinExistence type="inferred from homology"/>
<protein>
    <recommendedName>
        <fullName evidence="1">DNA replication and repair protein RecF</fullName>
    </recommendedName>
</protein>
<gene>
    <name evidence="1" type="primary">recF</name>
    <name type="ordered locus">Rleg2_4092</name>
</gene>